<protein>
    <recommendedName>
        <fullName evidence="1">GTP 3',8-cyclase</fullName>
        <ecNumber evidence="1">4.1.99.22</ecNumber>
    </recommendedName>
    <alternativeName>
        <fullName evidence="1">Molybdenum cofactor biosynthesis protein A</fullName>
    </alternativeName>
</protein>
<name>MOAA_STAA3</name>
<keyword id="KW-0004">4Fe-4S</keyword>
<keyword id="KW-0342">GTP-binding</keyword>
<keyword id="KW-0408">Iron</keyword>
<keyword id="KW-0411">Iron-sulfur</keyword>
<keyword id="KW-0456">Lyase</keyword>
<keyword id="KW-0479">Metal-binding</keyword>
<keyword id="KW-0501">Molybdenum cofactor biosynthesis</keyword>
<keyword id="KW-0547">Nucleotide-binding</keyword>
<keyword id="KW-0949">S-adenosyl-L-methionine</keyword>
<sequence length="340" mass="39078">MVEQIKDKLGRPIRDLRLSVTDRCNFRCDYCMPKEVFGDDFVFLPKNELLTFDEMARIAKVYAELGVKKIRITGGEPLMRRDLDVLIAKLNQIDGIEDIGLTTNGLLLKKHGQKLYDAGLRRINVSLDAIDDTLFQSINNRNIKATTILEQIDYATSIGLNVKVNVVIQKGINDDQIIPMLEYFKDKHIEIRFIEFMDVGNDNGWDFSKVVTKDEMLTMIEQHFEIDPVEPKYFGEVAKYYRHKDNGVQFGLITSVSQSFCSTCTRARLSSDGKFYGCLFATVDGFNVKAFIRSGVTDEELKEQFKALWQIRDDRYSDERTAQTVANRQRKKINMNYIGG</sequence>
<organism>
    <name type="scientific">Staphylococcus aureus (strain USA300)</name>
    <dbReference type="NCBI Taxonomy" id="367830"/>
    <lineage>
        <taxon>Bacteria</taxon>
        <taxon>Bacillati</taxon>
        <taxon>Bacillota</taxon>
        <taxon>Bacilli</taxon>
        <taxon>Bacillales</taxon>
        <taxon>Staphylococcaceae</taxon>
        <taxon>Staphylococcus</taxon>
    </lineage>
</organism>
<proteinExistence type="inferred from homology"/>
<feature type="chain" id="PRO_1000054229" description="GTP 3',8-cyclase">
    <location>
        <begin position="1"/>
        <end position="340"/>
    </location>
</feature>
<feature type="domain" description="Radical SAM core" evidence="2">
    <location>
        <begin position="8"/>
        <end position="227"/>
    </location>
</feature>
<feature type="binding site" evidence="1">
    <location>
        <position position="17"/>
    </location>
    <ligand>
        <name>GTP</name>
        <dbReference type="ChEBI" id="CHEBI:37565"/>
    </ligand>
</feature>
<feature type="binding site" evidence="1">
    <location>
        <position position="24"/>
    </location>
    <ligand>
        <name>[4Fe-4S] cluster</name>
        <dbReference type="ChEBI" id="CHEBI:49883"/>
        <label>1</label>
        <note>4Fe-4S-S-AdoMet</note>
    </ligand>
</feature>
<feature type="binding site" evidence="1">
    <location>
        <position position="28"/>
    </location>
    <ligand>
        <name>[4Fe-4S] cluster</name>
        <dbReference type="ChEBI" id="CHEBI:49883"/>
        <label>1</label>
        <note>4Fe-4S-S-AdoMet</note>
    </ligand>
</feature>
<feature type="binding site" evidence="1">
    <location>
        <position position="30"/>
    </location>
    <ligand>
        <name>S-adenosyl-L-methionine</name>
        <dbReference type="ChEBI" id="CHEBI:59789"/>
    </ligand>
</feature>
<feature type="binding site" evidence="1">
    <location>
        <position position="31"/>
    </location>
    <ligand>
        <name>[4Fe-4S] cluster</name>
        <dbReference type="ChEBI" id="CHEBI:49883"/>
        <label>1</label>
        <note>4Fe-4S-S-AdoMet</note>
    </ligand>
</feature>
<feature type="binding site" evidence="1">
    <location>
        <position position="71"/>
    </location>
    <ligand>
        <name>GTP</name>
        <dbReference type="ChEBI" id="CHEBI:37565"/>
    </ligand>
</feature>
<feature type="binding site" evidence="1">
    <location>
        <position position="75"/>
    </location>
    <ligand>
        <name>S-adenosyl-L-methionine</name>
        <dbReference type="ChEBI" id="CHEBI:59789"/>
    </ligand>
</feature>
<feature type="binding site" evidence="1">
    <location>
        <position position="102"/>
    </location>
    <ligand>
        <name>GTP</name>
        <dbReference type="ChEBI" id="CHEBI:37565"/>
    </ligand>
</feature>
<feature type="binding site" evidence="1">
    <location>
        <position position="126"/>
    </location>
    <ligand>
        <name>S-adenosyl-L-methionine</name>
        <dbReference type="ChEBI" id="CHEBI:59789"/>
    </ligand>
</feature>
<feature type="binding site" evidence="1">
    <location>
        <position position="163"/>
    </location>
    <ligand>
        <name>GTP</name>
        <dbReference type="ChEBI" id="CHEBI:37565"/>
    </ligand>
</feature>
<feature type="binding site" evidence="1">
    <location>
        <position position="197"/>
    </location>
    <ligand>
        <name>S-adenosyl-L-methionine</name>
        <dbReference type="ChEBI" id="CHEBI:59789"/>
    </ligand>
</feature>
<feature type="binding site" evidence="1">
    <location>
        <position position="261"/>
    </location>
    <ligand>
        <name>[4Fe-4S] cluster</name>
        <dbReference type="ChEBI" id="CHEBI:49883"/>
        <label>2</label>
        <note>4Fe-4S-substrate</note>
    </ligand>
</feature>
<feature type="binding site" evidence="1">
    <location>
        <position position="264"/>
    </location>
    <ligand>
        <name>[4Fe-4S] cluster</name>
        <dbReference type="ChEBI" id="CHEBI:49883"/>
        <label>2</label>
        <note>4Fe-4S-substrate</note>
    </ligand>
</feature>
<feature type="binding site" evidence="1">
    <location>
        <begin position="266"/>
        <end position="268"/>
    </location>
    <ligand>
        <name>GTP</name>
        <dbReference type="ChEBI" id="CHEBI:37565"/>
    </ligand>
</feature>
<feature type="binding site" evidence="1">
    <location>
        <position position="278"/>
    </location>
    <ligand>
        <name>[4Fe-4S] cluster</name>
        <dbReference type="ChEBI" id="CHEBI:49883"/>
        <label>2</label>
        <note>4Fe-4S-substrate</note>
    </ligand>
</feature>
<gene>
    <name evidence="1" type="primary">moaA</name>
    <name type="ordered locus">SAUSA300_2219</name>
</gene>
<accession>Q2FEM4</accession>
<comment type="function">
    <text evidence="1">Catalyzes the cyclization of GTP to (8S)-3',8-cyclo-7,8-dihydroguanosine 5'-triphosphate.</text>
</comment>
<comment type="catalytic activity">
    <reaction evidence="1">
        <text>GTP + AH2 + S-adenosyl-L-methionine = (8S)-3',8-cyclo-7,8-dihydroguanosine 5'-triphosphate + 5'-deoxyadenosine + L-methionine + A + H(+)</text>
        <dbReference type="Rhea" id="RHEA:49576"/>
        <dbReference type="ChEBI" id="CHEBI:13193"/>
        <dbReference type="ChEBI" id="CHEBI:15378"/>
        <dbReference type="ChEBI" id="CHEBI:17319"/>
        <dbReference type="ChEBI" id="CHEBI:17499"/>
        <dbReference type="ChEBI" id="CHEBI:37565"/>
        <dbReference type="ChEBI" id="CHEBI:57844"/>
        <dbReference type="ChEBI" id="CHEBI:59789"/>
        <dbReference type="ChEBI" id="CHEBI:131766"/>
        <dbReference type="EC" id="4.1.99.22"/>
    </reaction>
</comment>
<comment type="cofactor">
    <cofactor evidence="1">
        <name>[4Fe-4S] cluster</name>
        <dbReference type="ChEBI" id="CHEBI:49883"/>
    </cofactor>
    <text evidence="1">Binds 2 [4Fe-4S] clusters. Binds 1 [4Fe-4S] cluster coordinated with 3 cysteines and an exchangeable S-adenosyl-L-methionine and 1 [4Fe-4S] cluster coordinated with 3 cysteines and the GTP-derived substrate.</text>
</comment>
<comment type="pathway">
    <text evidence="1">Cofactor biosynthesis; molybdopterin biosynthesis.</text>
</comment>
<comment type="subunit">
    <text evidence="1">Monomer and homodimer.</text>
</comment>
<comment type="similarity">
    <text evidence="1">Belongs to the radical SAM superfamily. MoaA family.</text>
</comment>
<dbReference type="EC" id="4.1.99.22" evidence="1"/>
<dbReference type="EMBL" id="CP000255">
    <property type="protein sequence ID" value="ABD21555.1"/>
    <property type="molecule type" value="Genomic_DNA"/>
</dbReference>
<dbReference type="RefSeq" id="WP_000230173.1">
    <property type="nucleotide sequence ID" value="NZ_CP027476.1"/>
</dbReference>
<dbReference type="SMR" id="Q2FEM4"/>
<dbReference type="KEGG" id="saa:SAUSA300_2219"/>
<dbReference type="HOGENOM" id="CLU_009273_0_1_9"/>
<dbReference type="OMA" id="VPMARHF"/>
<dbReference type="UniPathway" id="UPA00344"/>
<dbReference type="Proteomes" id="UP000001939">
    <property type="component" value="Chromosome"/>
</dbReference>
<dbReference type="GO" id="GO:0051539">
    <property type="term" value="F:4 iron, 4 sulfur cluster binding"/>
    <property type="evidence" value="ECO:0007669"/>
    <property type="project" value="UniProtKB-UniRule"/>
</dbReference>
<dbReference type="GO" id="GO:0061799">
    <property type="term" value="F:cyclic pyranopterin monophosphate synthase activity"/>
    <property type="evidence" value="ECO:0007669"/>
    <property type="project" value="TreeGrafter"/>
</dbReference>
<dbReference type="GO" id="GO:0061798">
    <property type="term" value="F:GTP 3',8'-cyclase activity"/>
    <property type="evidence" value="ECO:0007669"/>
    <property type="project" value="UniProtKB-UniRule"/>
</dbReference>
<dbReference type="GO" id="GO:0005525">
    <property type="term" value="F:GTP binding"/>
    <property type="evidence" value="ECO:0007669"/>
    <property type="project" value="UniProtKB-UniRule"/>
</dbReference>
<dbReference type="GO" id="GO:0046872">
    <property type="term" value="F:metal ion binding"/>
    <property type="evidence" value="ECO:0007669"/>
    <property type="project" value="UniProtKB-KW"/>
</dbReference>
<dbReference type="GO" id="GO:1904047">
    <property type="term" value="F:S-adenosyl-L-methionine binding"/>
    <property type="evidence" value="ECO:0007669"/>
    <property type="project" value="UniProtKB-UniRule"/>
</dbReference>
<dbReference type="GO" id="GO:0006777">
    <property type="term" value="P:Mo-molybdopterin cofactor biosynthetic process"/>
    <property type="evidence" value="ECO:0007669"/>
    <property type="project" value="UniProtKB-UniRule"/>
</dbReference>
<dbReference type="CDD" id="cd01335">
    <property type="entry name" value="Radical_SAM"/>
    <property type="match status" value="1"/>
</dbReference>
<dbReference type="CDD" id="cd21117">
    <property type="entry name" value="Twitch_MoaA"/>
    <property type="match status" value="1"/>
</dbReference>
<dbReference type="Gene3D" id="3.20.20.70">
    <property type="entry name" value="Aldolase class I"/>
    <property type="match status" value="1"/>
</dbReference>
<dbReference type="HAMAP" id="MF_01225_B">
    <property type="entry name" value="MoaA_B"/>
    <property type="match status" value="1"/>
</dbReference>
<dbReference type="InterPro" id="IPR013785">
    <property type="entry name" value="Aldolase_TIM"/>
</dbReference>
<dbReference type="InterPro" id="IPR006638">
    <property type="entry name" value="Elp3/MiaA/NifB-like_rSAM"/>
</dbReference>
<dbReference type="InterPro" id="IPR013483">
    <property type="entry name" value="MoaA"/>
</dbReference>
<dbReference type="InterPro" id="IPR000385">
    <property type="entry name" value="MoaA_NifB_PqqE_Fe-S-bd_CS"/>
</dbReference>
<dbReference type="InterPro" id="IPR010505">
    <property type="entry name" value="MoaA_twitch"/>
</dbReference>
<dbReference type="InterPro" id="IPR050105">
    <property type="entry name" value="MoCo_biosynth_MoaA/MoaC"/>
</dbReference>
<dbReference type="InterPro" id="IPR007197">
    <property type="entry name" value="rSAM"/>
</dbReference>
<dbReference type="NCBIfam" id="TIGR02666">
    <property type="entry name" value="moaA"/>
    <property type="match status" value="1"/>
</dbReference>
<dbReference type="PANTHER" id="PTHR22960:SF0">
    <property type="entry name" value="MOLYBDENUM COFACTOR BIOSYNTHESIS PROTEIN 1"/>
    <property type="match status" value="1"/>
</dbReference>
<dbReference type="PANTHER" id="PTHR22960">
    <property type="entry name" value="MOLYBDOPTERIN COFACTOR SYNTHESIS PROTEIN A"/>
    <property type="match status" value="1"/>
</dbReference>
<dbReference type="Pfam" id="PF06463">
    <property type="entry name" value="Mob_synth_C"/>
    <property type="match status" value="1"/>
</dbReference>
<dbReference type="Pfam" id="PF04055">
    <property type="entry name" value="Radical_SAM"/>
    <property type="match status" value="1"/>
</dbReference>
<dbReference type="SFLD" id="SFLDF00276">
    <property type="entry name" value="cyclic_pyranopterin_phosphate"/>
    <property type="match status" value="1"/>
</dbReference>
<dbReference type="SFLD" id="SFLDG01216">
    <property type="entry name" value="thioether_bond_formation_requi"/>
    <property type="match status" value="1"/>
</dbReference>
<dbReference type="SMART" id="SM00729">
    <property type="entry name" value="Elp3"/>
    <property type="match status" value="1"/>
</dbReference>
<dbReference type="SUPFAM" id="SSF102114">
    <property type="entry name" value="Radical SAM enzymes"/>
    <property type="match status" value="1"/>
</dbReference>
<dbReference type="PROSITE" id="PS01305">
    <property type="entry name" value="MOAA_NIFB_PQQE"/>
    <property type="match status" value="1"/>
</dbReference>
<dbReference type="PROSITE" id="PS51918">
    <property type="entry name" value="RADICAL_SAM"/>
    <property type="match status" value="1"/>
</dbReference>
<reference key="1">
    <citation type="journal article" date="2006" name="Lancet">
        <title>Complete genome sequence of USA300, an epidemic clone of community-acquired meticillin-resistant Staphylococcus aureus.</title>
        <authorList>
            <person name="Diep B.A."/>
            <person name="Gill S.R."/>
            <person name="Chang R.F."/>
            <person name="Phan T.H."/>
            <person name="Chen J.H."/>
            <person name="Davidson M.G."/>
            <person name="Lin F."/>
            <person name="Lin J."/>
            <person name="Carleton H.A."/>
            <person name="Mongodin E.F."/>
            <person name="Sensabaugh G.F."/>
            <person name="Perdreau-Remington F."/>
        </authorList>
    </citation>
    <scope>NUCLEOTIDE SEQUENCE [LARGE SCALE GENOMIC DNA]</scope>
    <source>
        <strain>USA300</strain>
    </source>
</reference>
<evidence type="ECO:0000255" key="1">
    <source>
        <dbReference type="HAMAP-Rule" id="MF_01225"/>
    </source>
</evidence>
<evidence type="ECO:0000255" key="2">
    <source>
        <dbReference type="PROSITE-ProRule" id="PRU01266"/>
    </source>
</evidence>